<reference key="1">
    <citation type="journal article" date="1999" name="DNA Res.">
        <title>Prediction of the coding sequences of unidentified human genes. XIII. The complete sequences of 100 new cDNA clones from brain which code for large proteins in vitro.</title>
        <authorList>
            <person name="Nagase T."/>
            <person name="Ishikawa K."/>
            <person name="Suyama M."/>
            <person name="Kikuno R."/>
            <person name="Hirosawa M."/>
            <person name="Miyajima N."/>
            <person name="Tanaka A."/>
            <person name="Kotani H."/>
            <person name="Nomura N."/>
            <person name="Ohara O."/>
        </authorList>
    </citation>
    <scope>NUCLEOTIDE SEQUENCE [LARGE SCALE MRNA] (ISOFORM 1)</scope>
    <source>
        <tissue>Brain</tissue>
    </source>
</reference>
<reference key="2">
    <citation type="journal article" date="2004" name="Nat. Genet.">
        <title>Complete sequencing and characterization of 21,243 full-length human cDNAs.</title>
        <authorList>
            <person name="Ota T."/>
            <person name="Suzuki Y."/>
            <person name="Nishikawa T."/>
            <person name="Otsuki T."/>
            <person name="Sugiyama T."/>
            <person name="Irie R."/>
            <person name="Wakamatsu A."/>
            <person name="Hayashi K."/>
            <person name="Sato H."/>
            <person name="Nagai K."/>
            <person name="Kimura K."/>
            <person name="Makita H."/>
            <person name="Sekine M."/>
            <person name="Obayashi M."/>
            <person name="Nishi T."/>
            <person name="Shibahara T."/>
            <person name="Tanaka T."/>
            <person name="Ishii S."/>
            <person name="Yamamoto J."/>
            <person name="Saito K."/>
            <person name="Kawai Y."/>
            <person name="Isono Y."/>
            <person name="Nakamura Y."/>
            <person name="Nagahari K."/>
            <person name="Murakami K."/>
            <person name="Yasuda T."/>
            <person name="Iwayanagi T."/>
            <person name="Wagatsuma M."/>
            <person name="Shiratori A."/>
            <person name="Sudo H."/>
            <person name="Hosoiri T."/>
            <person name="Kaku Y."/>
            <person name="Kodaira H."/>
            <person name="Kondo H."/>
            <person name="Sugawara M."/>
            <person name="Takahashi M."/>
            <person name="Kanda K."/>
            <person name="Yokoi T."/>
            <person name="Furuya T."/>
            <person name="Kikkawa E."/>
            <person name="Omura Y."/>
            <person name="Abe K."/>
            <person name="Kamihara K."/>
            <person name="Katsuta N."/>
            <person name="Sato K."/>
            <person name="Tanikawa M."/>
            <person name="Yamazaki M."/>
            <person name="Ninomiya K."/>
            <person name="Ishibashi T."/>
            <person name="Yamashita H."/>
            <person name="Murakawa K."/>
            <person name="Fujimori K."/>
            <person name="Tanai H."/>
            <person name="Kimata M."/>
            <person name="Watanabe M."/>
            <person name="Hiraoka S."/>
            <person name="Chiba Y."/>
            <person name="Ishida S."/>
            <person name="Ono Y."/>
            <person name="Takiguchi S."/>
            <person name="Watanabe S."/>
            <person name="Yosida M."/>
            <person name="Hotuta T."/>
            <person name="Kusano J."/>
            <person name="Kanehori K."/>
            <person name="Takahashi-Fujii A."/>
            <person name="Hara H."/>
            <person name="Tanase T.-O."/>
            <person name="Nomura Y."/>
            <person name="Togiya S."/>
            <person name="Komai F."/>
            <person name="Hara R."/>
            <person name="Takeuchi K."/>
            <person name="Arita M."/>
            <person name="Imose N."/>
            <person name="Musashino K."/>
            <person name="Yuuki H."/>
            <person name="Oshima A."/>
            <person name="Sasaki N."/>
            <person name="Aotsuka S."/>
            <person name="Yoshikawa Y."/>
            <person name="Matsunawa H."/>
            <person name="Ichihara T."/>
            <person name="Shiohata N."/>
            <person name="Sano S."/>
            <person name="Moriya S."/>
            <person name="Momiyama H."/>
            <person name="Satoh N."/>
            <person name="Takami S."/>
            <person name="Terashima Y."/>
            <person name="Suzuki O."/>
            <person name="Nakagawa S."/>
            <person name="Senoh A."/>
            <person name="Mizoguchi H."/>
            <person name="Goto Y."/>
            <person name="Shimizu F."/>
            <person name="Wakebe H."/>
            <person name="Hishigaki H."/>
            <person name="Watanabe T."/>
            <person name="Sugiyama A."/>
            <person name="Takemoto M."/>
            <person name="Kawakami B."/>
            <person name="Yamazaki M."/>
            <person name="Watanabe K."/>
            <person name="Kumagai A."/>
            <person name="Itakura S."/>
            <person name="Fukuzumi Y."/>
            <person name="Fujimori Y."/>
            <person name="Komiyama M."/>
            <person name="Tashiro H."/>
            <person name="Tanigami A."/>
            <person name="Fujiwara T."/>
            <person name="Ono T."/>
            <person name="Yamada K."/>
            <person name="Fujii Y."/>
            <person name="Ozaki K."/>
            <person name="Hirao M."/>
            <person name="Ohmori Y."/>
            <person name="Kawabata A."/>
            <person name="Hikiji T."/>
            <person name="Kobatake N."/>
            <person name="Inagaki H."/>
            <person name="Ikema Y."/>
            <person name="Okamoto S."/>
            <person name="Okitani R."/>
            <person name="Kawakami T."/>
            <person name="Noguchi S."/>
            <person name="Itoh T."/>
            <person name="Shigeta K."/>
            <person name="Senba T."/>
            <person name="Matsumura K."/>
            <person name="Nakajima Y."/>
            <person name="Mizuno T."/>
            <person name="Morinaga M."/>
            <person name="Sasaki M."/>
            <person name="Togashi T."/>
            <person name="Oyama M."/>
            <person name="Hata H."/>
            <person name="Watanabe M."/>
            <person name="Komatsu T."/>
            <person name="Mizushima-Sugano J."/>
            <person name="Satoh T."/>
            <person name="Shirai Y."/>
            <person name="Takahashi Y."/>
            <person name="Nakagawa K."/>
            <person name="Okumura K."/>
            <person name="Nagase T."/>
            <person name="Nomura N."/>
            <person name="Kikuchi H."/>
            <person name="Masuho Y."/>
            <person name="Yamashita R."/>
            <person name="Nakai K."/>
            <person name="Yada T."/>
            <person name="Nakamura Y."/>
            <person name="Ohara O."/>
            <person name="Isogai T."/>
            <person name="Sugano S."/>
        </authorList>
    </citation>
    <scope>NUCLEOTIDE SEQUENCE [LARGE SCALE MRNA] (ISOFORMS 2 AND 3)</scope>
    <source>
        <tissue>Testis</tissue>
    </source>
</reference>
<reference key="3">
    <citation type="journal article" date="2007" name="BMC Genomics">
        <title>The full-ORF clone resource of the German cDNA consortium.</title>
        <authorList>
            <person name="Bechtel S."/>
            <person name="Rosenfelder H."/>
            <person name="Duda A."/>
            <person name="Schmidt C.P."/>
            <person name="Ernst U."/>
            <person name="Wellenreuther R."/>
            <person name="Mehrle A."/>
            <person name="Schuster C."/>
            <person name="Bahr A."/>
            <person name="Bloecker H."/>
            <person name="Heubner D."/>
            <person name="Hoerlein A."/>
            <person name="Michel G."/>
            <person name="Wedler H."/>
            <person name="Koehrer K."/>
            <person name="Ottenwaelder B."/>
            <person name="Poustka A."/>
            <person name="Wiemann S."/>
            <person name="Schupp I."/>
        </authorList>
    </citation>
    <scope>NUCLEOTIDE SEQUENCE [LARGE SCALE MRNA] (ISOFORM 1)</scope>
    <source>
        <tissue>Retina</tissue>
    </source>
</reference>
<reference key="4">
    <citation type="journal article" date="2004" name="Nature">
        <title>DNA sequence and analysis of human chromosome 9.</title>
        <authorList>
            <person name="Humphray S.J."/>
            <person name="Oliver K."/>
            <person name="Hunt A.R."/>
            <person name="Plumb R.W."/>
            <person name="Loveland J.E."/>
            <person name="Howe K.L."/>
            <person name="Andrews T.D."/>
            <person name="Searle S."/>
            <person name="Hunt S.E."/>
            <person name="Scott C.E."/>
            <person name="Jones M.C."/>
            <person name="Ainscough R."/>
            <person name="Almeida J.P."/>
            <person name="Ambrose K.D."/>
            <person name="Ashwell R.I.S."/>
            <person name="Babbage A.K."/>
            <person name="Babbage S."/>
            <person name="Bagguley C.L."/>
            <person name="Bailey J."/>
            <person name="Banerjee R."/>
            <person name="Barker D.J."/>
            <person name="Barlow K.F."/>
            <person name="Bates K."/>
            <person name="Beasley H."/>
            <person name="Beasley O."/>
            <person name="Bird C.P."/>
            <person name="Bray-Allen S."/>
            <person name="Brown A.J."/>
            <person name="Brown J.Y."/>
            <person name="Burford D."/>
            <person name="Burrill W."/>
            <person name="Burton J."/>
            <person name="Carder C."/>
            <person name="Carter N.P."/>
            <person name="Chapman J.C."/>
            <person name="Chen Y."/>
            <person name="Clarke G."/>
            <person name="Clark S.Y."/>
            <person name="Clee C.M."/>
            <person name="Clegg S."/>
            <person name="Collier R.E."/>
            <person name="Corby N."/>
            <person name="Crosier M."/>
            <person name="Cummings A.T."/>
            <person name="Davies J."/>
            <person name="Dhami P."/>
            <person name="Dunn M."/>
            <person name="Dutta I."/>
            <person name="Dyer L.W."/>
            <person name="Earthrowl M.E."/>
            <person name="Faulkner L."/>
            <person name="Fleming C.J."/>
            <person name="Frankish A."/>
            <person name="Frankland J.A."/>
            <person name="French L."/>
            <person name="Fricker D.G."/>
            <person name="Garner P."/>
            <person name="Garnett J."/>
            <person name="Ghori J."/>
            <person name="Gilbert J.G.R."/>
            <person name="Glison C."/>
            <person name="Grafham D.V."/>
            <person name="Gribble S."/>
            <person name="Griffiths C."/>
            <person name="Griffiths-Jones S."/>
            <person name="Grocock R."/>
            <person name="Guy J."/>
            <person name="Hall R.E."/>
            <person name="Hammond S."/>
            <person name="Harley J.L."/>
            <person name="Harrison E.S.I."/>
            <person name="Hart E.A."/>
            <person name="Heath P.D."/>
            <person name="Henderson C.D."/>
            <person name="Hopkins B.L."/>
            <person name="Howard P.J."/>
            <person name="Howden P.J."/>
            <person name="Huckle E."/>
            <person name="Johnson C."/>
            <person name="Johnson D."/>
            <person name="Joy A.A."/>
            <person name="Kay M."/>
            <person name="Keenan S."/>
            <person name="Kershaw J.K."/>
            <person name="Kimberley A.M."/>
            <person name="King A."/>
            <person name="Knights A."/>
            <person name="Laird G.K."/>
            <person name="Langford C."/>
            <person name="Lawlor S."/>
            <person name="Leongamornlert D.A."/>
            <person name="Leversha M."/>
            <person name="Lloyd C."/>
            <person name="Lloyd D.M."/>
            <person name="Lovell J."/>
            <person name="Martin S."/>
            <person name="Mashreghi-Mohammadi M."/>
            <person name="Matthews L."/>
            <person name="McLaren S."/>
            <person name="McLay K.E."/>
            <person name="McMurray A."/>
            <person name="Milne S."/>
            <person name="Nickerson T."/>
            <person name="Nisbett J."/>
            <person name="Nordsiek G."/>
            <person name="Pearce A.V."/>
            <person name="Peck A.I."/>
            <person name="Porter K.M."/>
            <person name="Pandian R."/>
            <person name="Pelan S."/>
            <person name="Phillimore B."/>
            <person name="Povey S."/>
            <person name="Ramsey Y."/>
            <person name="Rand V."/>
            <person name="Scharfe M."/>
            <person name="Sehra H.K."/>
            <person name="Shownkeen R."/>
            <person name="Sims S.K."/>
            <person name="Skuce C.D."/>
            <person name="Smith M."/>
            <person name="Steward C.A."/>
            <person name="Swarbreck D."/>
            <person name="Sycamore N."/>
            <person name="Tester J."/>
            <person name="Thorpe A."/>
            <person name="Tracey A."/>
            <person name="Tromans A."/>
            <person name="Thomas D.W."/>
            <person name="Wall M."/>
            <person name="Wallis J.M."/>
            <person name="West A.P."/>
            <person name="Whitehead S.L."/>
            <person name="Willey D.L."/>
            <person name="Williams S.A."/>
            <person name="Wilming L."/>
            <person name="Wray P.W."/>
            <person name="Young L."/>
            <person name="Ashurst J.L."/>
            <person name="Coulson A."/>
            <person name="Blocker H."/>
            <person name="Durbin R.M."/>
            <person name="Sulston J.E."/>
            <person name="Hubbard T."/>
            <person name="Jackson M.J."/>
            <person name="Bentley D.R."/>
            <person name="Beck S."/>
            <person name="Rogers J."/>
            <person name="Dunham I."/>
        </authorList>
    </citation>
    <scope>NUCLEOTIDE SEQUENCE [LARGE SCALE GENOMIC DNA]</scope>
</reference>
<reference key="5">
    <citation type="submission" date="2005-09" db="EMBL/GenBank/DDBJ databases">
        <authorList>
            <person name="Mural R.J."/>
            <person name="Istrail S."/>
            <person name="Sutton G.G."/>
            <person name="Florea L."/>
            <person name="Halpern A.L."/>
            <person name="Mobarry C.M."/>
            <person name="Lippert R."/>
            <person name="Walenz B."/>
            <person name="Shatkay H."/>
            <person name="Dew I."/>
            <person name="Miller J.R."/>
            <person name="Flanigan M.J."/>
            <person name="Edwards N.J."/>
            <person name="Bolanos R."/>
            <person name="Fasulo D."/>
            <person name="Halldorsson B.V."/>
            <person name="Hannenhalli S."/>
            <person name="Turner R."/>
            <person name="Yooseph S."/>
            <person name="Lu F."/>
            <person name="Nusskern D.R."/>
            <person name="Shue B.C."/>
            <person name="Zheng X.H."/>
            <person name="Zhong F."/>
            <person name="Delcher A.L."/>
            <person name="Huson D.H."/>
            <person name="Kravitz S.A."/>
            <person name="Mouchard L."/>
            <person name="Reinert K."/>
            <person name="Remington K.A."/>
            <person name="Clark A.G."/>
            <person name="Waterman M.S."/>
            <person name="Eichler E.E."/>
            <person name="Adams M.D."/>
            <person name="Hunkapiller M.W."/>
            <person name="Myers E.W."/>
            <person name="Venter J.C."/>
        </authorList>
    </citation>
    <scope>NUCLEOTIDE SEQUENCE [LARGE SCALE GENOMIC DNA]</scope>
</reference>
<reference key="6">
    <citation type="journal article" date="2004" name="Genome Res.">
        <title>The status, quality, and expansion of the NIH full-length cDNA project: the Mammalian Gene Collection (MGC).</title>
        <authorList>
            <consortium name="The MGC Project Team"/>
        </authorList>
    </citation>
    <scope>NUCLEOTIDE SEQUENCE [LARGE SCALE MRNA] (ISOFORM 1)</scope>
    <scope>VARIANT ASP-846</scope>
</reference>
<reference key="7">
    <citation type="journal article" date="2008" name="J. Biol. Chem.">
        <title>The PDZ and band 4.1 containing protein Frmpd1 regulates the subcellular location of activator of G-protein signaling 3 and its interaction with G-proteins.</title>
        <authorList>
            <person name="An N."/>
            <person name="Blumer J.B."/>
            <person name="Bernard M.L."/>
            <person name="Lanier S.M."/>
        </authorList>
    </citation>
    <scope>INTERACTION WITH GPSM1</scope>
    <scope>FUNCTION</scope>
    <scope>SUBCELLULAR LOCATION</scope>
</reference>
<reference key="8">
    <citation type="submission" date="2007-08" db="PDB data bank">
        <title>Solution structure of the PDZ domain from human FERM and PDZ domain-containing 1.</title>
        <authorList>
            <consortium name="RIKEN structural genomics initiative (RSGI)"/>
        </authorList>
    </citation>
    <scope>STRUCTURE BY NMR OF 54-136</scope>
</reference>
<reference key="9">
    <citation type="journal article" date="2013" name="J. Mol. Biol.">
        <title>Structural and biochemical characterization of the interaction between LGN and Frmpd1.</title>
        <authorList>
            <person name="Pan Z."/>
            <person name="Shang Y."/>
            <person name="Jia M."/>
            <person name="Zhang L."/>
            <person name="Xia C."/>
            <person name="Zhang M."/>
            <person name="Wang W."/>
            <person name="Wen W."/>
        </authorList>
    </citation>
    <scope>X-RAY CRYSTALLOGRAPHY (2.40 ANGSTROMS) OF 901-938 IN COMPLEX WITH GPSM2</scope>
    <scope>INTERACTION WITH GPSM2</scope>
    <scope>MUTAGENESIS OF GLU-924; GLU-929 AND LYS-931</scope>
    <scope>REGION</scope>
</reference>
<reference key="10">
    <citation type="journal article" date="2006" name="Science">
        <title>The consensus coding sequences of human breast and colorectal cancers.</title>
        <authorList>
            <person name="Sjoeblom T."/>
            <person name="Jones S."/>
            <person name="Wood L.D."/>
            <person name="Parsons D.W."/>
            <person name="Lin J."/>
            <person name="Barber T.D."/>
            <person name="Mandelker D."/>
            <person name="Leary R.J."/>
            <person name="Ptak J."/>
            <person name="Silliman N."/>
            <person name="Szabo S."/>
            <person name="Buckhaults P."/>
            <person name="Farrell C."/>
            <person name="Meeh P."/>
            <person name="Markowitz S.D."/>
            <person name="Willis J."/>
            <person name="Dawson D."/>
            <person name="Willson J.K.V."/>
            <person name="Gazdar A.F."/>
            <person name="Hartigan J."/>
            <person name="Wu L."/>
            <person name="Liu C."/>
            <person name="Parmigiani G."/>
            <person name="Park B.H."/>
            <person name="Bachman K.E."/>
            <person name="Papadopoulos N."/>
            <person name="Vogelstein B."/>
            <person name="Kinzler K.W."/>
            <person name="Velculescu V.E."/>
        </authorList>
    </citation>
    <scope>VARIANT [LARGE SCALE ANALYSIS] ASP-572</scope>
</reference>
<gene>
    <name type="primary">FRMPD1</name>
    <name type="synonym">FRMD2</name>
    <name type="synonym">KIAA0967</name>
</gene>
<feature type="chain" id="PRO_0000306805" description="FERM and PDZ domain-containing protein 1">
    <location>
        <begin position="1"/>
        <end position="1578"/>
    </location>
</feature>
<feature type="domain" description="PDZ" evidence="2">
    <location>
        <begin position="57"/>
        <end position="135"/>
    </location>
</feature>
<feature type="domain" description="FERM" evidence="1">
    <location>
        <begin position="181"/>
        <end position="496"/>
    </location>
</feature>
<feature type="region of interest" description="Disordered" evidence="3">
    <location>
        <begin position="555"/>
        <end position="616"/>
    </location>
</feature>
<feature type="region of interest" description="Disordered" evidence="3">
    <location>
        <begin position="720"/>
        <end position="743"/>
    </location>
</feature>
<feature type="region of interest" description="Disordered" evidence="3">
    <location>
        <begin position="759"/>
        <end position="831"/>
    </location>
</feature>
<feature type="region of interest" description="Important for interaction with GPSM2" evidence="7">
    <location>
        <begin position="924"/>
        <end position="931"/>
    </location>
</feature>
<feature type="region of interest" description="Disordered" evidence="3">
    <location>
        <begin position="950"/>
        <end position="1030"/>
    </location>
</feature>
<feature type="region of interest" description="Disordered" evidence="3">
    <location>
        <begin position="1070"/>
        <end position="1194"/>
    </location>
</feature>
<feature type="region of interest" description="Disordered" evidence="3">
    <location>
        <begin position="1347"/>
        <end position="1374"/>
    </location>
</feature>
<feature type="compositionally biased region" description="Polar residues" evidence="3">
    <location>
        <begin position="720"/>
        <end position="729"/>
    </location>
</feature>
<feature type="compositionally biased region" description="Low complexity" evidence="3">
    <location>
        <begin position="730"/>
        <end position="742"/>
    </location>
</feature>
<feature type="compositionally biased region" description="Polar residues" evidence="3">
    <location>
        <begin position="793"/>
        <end position="811"/>
    </location>
</feature>
<feature type="compositionally biased region" description="Basic residues" evidence="3">
    <location>
        <begin position="822"/>
        <end position="831"/>
    </location>
</feature>
<feature type="compositionally biased region" description="Polar residues" evidence="3">
    <location>
        <begin position="968"/>
        <end position="986"/>
    </location>
</feature>
<feature type="compositionally biased region" description="Basic and acidic residues" evidence="3">
    <location>
        <begin position="1100"/>
        <end position="1117"/>
    </location>
</feature>
<feature type="compositionally biased region" description="Polar residues" evidence="3">
    <location>
        <begin position="1139"/>
        <end position="1150"/>
    </location>
</feature>
<feature type="splice variant" id="VSP_056060" description="In isoform 2." evidence="8">
    <location>
        <begin position="1"/>
        <end position="178"/>
    </location>
</feature>
<feature type="splice variant" id="VSP_056061" description="In isoform 3." evidence="8">
    <original>MEELE</original>
    <variation>MAEVG</variation>
    <location>
        <begin position="1"/>
        <end position="5"/>
    </location>
</feature>
<feature type="splice variant" id="VSP_056062" description="In isoform 3." evidence="8">
    <location>
        <begin position="6"/>
        <end position="136"/>
    </location>
</feature>
<feature type="splice variant" id="VSP_056063" description="In isoform 2 and isoform 3." evidence="8">
    <original>PRDVSTAEPSATSLQNKASTSSPENS</original>
    <variation>EPSLAGLQTRQAAPECLPGIKAWGQA</variation>
    <location>
        <begin position="787"/>
        <end position="812"/>
    </location>
</feature>
<feature type="splice variant" id="VSP_056064" description="In isoform 2 and isoform 3." evidence="8">
    <location>
        <begin position="813"/>
        <end position="1578"/>
    </location>
</feature>
<feature type="sequence variant" id="VAR_035306" description="In dbSNP:rs3747539.">
    <original>T</original>
    <variation>P</variation>
    <location>
        <position position="6"/>
    </location>
</feature>
<feature type="sequence variant" id="VAR_035307" description="In dbSNP:rs2296556.">
    <original>A</original>
    <variation>T</variation>
    <location>
        <position position="44"/>
    </location>
</feature>
<feature type="sequence variant" id="VAR_035308" description="In dbSNP:rs7031966.">
    <original>T</original>
    <variation>N</variation>
    <location>
        <position position="50"/>
    </location>
</feature>
<feature type="sequence variant" id="VAR_035309" description="In dbSNP:rs1359590.">
    <original>A</original>
    <variation>V</variation>
    <location>
        <position position="225"/>
    </location>
</feature>
<feature type="sequence variant" id="VAR_035445" description="In a breast cancer sample; somatic mutation." evidence="5">
    <original>G</original>
    <variation>D</variation>
    <location>
        <position position="572"/>
    </location>
</feature>
<feature type="sequence variant" id="VAR_035310" description="In dbSNP:rs34233395." evidence="4">
    <original>Y</original>
    <variation>D</variation>
    <location>
        <position position="846"/>
    </location>
</feature>
<feature type="sequence variant" id="VAR_035311" description="In dbSNP:rs35075933.">
    <original>G</original>
    <variation>E</variation>
    <location>
        <position position="1092"/>
    </location>
</feature>
<feature type="mutagenesis site" description="Abolishes interaction with GPSM2." evidence="7">
    <original>E</original>
    <variation>A</variation>
    <location>
        <position position="924"/>
    </location>
</feature>
<feature type="mutagenesis site" description="Strongly reduces GPSM2 binding." evidence="7">
    <original>E</original>
    <variation>A</variation>
    <location>
        <position position="929"/>
    </location>
</feature>
<feature type="mutagenesis site" description="Strongly reduces GPSM2 binding." evidence="7">
    <original>K</original>
    <variation>A</variation>
    <location>
        <position position="931"/>
    </location>
</feature>
<feature type="sequence conflict" description="In Ref. 3; CAI46019." evidence="9" ref="3">
    <original>T</original>
    <variation>A</variation>
    <location>
        <position position="404"/>
    </location>
</feature>
<feature type="sequence conflict" description="In Ref. 3; CAI46019." evidence="9" ref="3">
    <original>I</original>
    <variation>T</variation>
    <location>
        <position position="428"/>
    </location>
</feature>
<feature type="sequence conflict" description="In Ref. 1; BAA76811." evidence="9" ref="1">
    <original>S</original>
    <variation>L</variation>
    <location>
        <position position="1278"/>
    </location>
</feature>
<feature type="sequence conflict" description="In Ref. 3; CAI46019." evidence="9" ref="3">
    <original>T</original>
    <variation>A</variation>
    <location>
        <position position="1418"/>
    </location>
</feature>
<feature type="sequence conflict" description="In Ref. 3; CAI46019." evidence="9" ref="3">
    <original>H</original>
    <variation>I</variation>
    <location>
        <position position="1446"/>
    </location>
</feature>
<feature type="strand" evidence="10">
    <location>
        <begin position="54"/>
        <end position="60"/>
    </location>
</feature>
<feature type="strand" evidence="10">
    <location>
        <begin position="64"/>
        <end position="66"/>
    </location>
</feature>
<feature type="strand" evidence="10">
    <location>
        <begin position="75"/>
        <end position="78"/>
    </location>
</feature>
<feature type="strand" evidence="10">
    <location>
        <begin position="86"/>
        <end position="90"/>
    </location>
</feature>
<feature type="turn" evidence="10">
    <location>
        <begin position="91"/>
        <end position="93"/>
    </location>
</feature>
<feature type="strand" evidence="10">
    <location>
        <begin position="99"/>
        <end position="105"/>
    </location>
</feature>
<feature type="helix" evidence="10">
    <location>
        <begin position="113"/>
        <end position="122"/>
    </location>
</feature>
<feature type="strand" evidence="10">
    <location>
        <begin position="127"/>
        <end position="133"/>
    </location>
</feature>
<dbReference type="EMBL" id="AB023184">
    <property type="protein sequence ID" value="BAA76811.1"/>
    <property type="molecule type" value="mRNA"/>
</dbReference>
<dbReference type="EMBL" id="AK302739">
    <property type="protein sequence ID" value="BAH13793.1"/>
    <property type="molecule type" value="mRNA"/>
</dbReference>
<dbReference type="EMBL" id="AK302854">
    <property type="protein sequence ID" value="BAG64040.1"/>
    <property type="molecule type" value="mRNA"/>
</dbReference>
<dbReference type="EMBL" id="BX648967">
    <property type="protein sequence ID" value="CAI46019.1"/>
    <property type="molecule type" value="mRNA"/>
</dbReference>
<dbReference type="EMBL" id="AL513165">
    <property type="status" value="NOT_ANNOTATED_CDS"/>
    <property type="molecule type" value="Genomic_DNA"/>
</dbReference>
<dbReference type="EMBL" id="AL591470">
    <property type="status" value="NOT_ANNOTATED_CDS"/>
    <property type="molecule type" value="Genomic_DNA"/>
</dbReference>
<dbReference type="EMBL" id="CH471071">
    <property type="protein sequence ID" value="EAW58270.1"/>
    <property type="molecule type" value="Genomic_DNA"/>
</dbReference>
<dbReference type="EMBL" id="CH471071">
    <property type="protein sequence ID" value="EAW58271.1"/>
    <property type="molecule type" value="Genomic_DNA"/>
</dbReference>
<dbReference type="EMBL" id="BC114965">
    <property type="protein sequence ID" value="AAI14966.1"/>
    <property type="molecule type" value="mRNA"/>
</dbReference>
<dbReference type="CCDS" id="CCDS6612.1">
    <molecule id="Q5SYB0-1"/>
</dbReference>
<dbReference type="RefSeq" id="NP_001358152.1">
    <molecule id="Q5SYB0-1"/>
    <property type="nucleotide sequence ID" value="NM_001371223.1"/>
</dbReference>
<dbReference type="RefSeq" id="NP_001358153.1">
    <molecule id="Q5SYB0-1"/>
    <property type="nucleotide sequence ID" value="NM_001371224.1"/>
</dbReference>
<dbReference type="RefSeq" id="NP_001358154.1">
    <molecule id="Q5SYB0-1"/>
    <property type="nucleotide sequence ID" value="NM_001371225.1"/>
</dbReference>
<dbReference type="RefSeq" id="NP_055722.2">
    <molecule id="Q5SYB0-1"/>
    <property type="nucleotide sequence ID" value="NM_014907.3"/>
</dbReference>
<dbReference type="RefSeq" id="XP_011516105.1">
    <property type="nucleotide sequence ID" value="XM_011517803.2"/>
</dbReference>
<dbReference type="RefSeq" id="XP_011516106.1">
    <property type="nucleotide sequence ID" value="XM_011517804.2"/>
</dbReference>
<dbReference type="RefSeq" id="XP_016869969.1">
    <property type="nucleotide sequence ID" value="XM_017014480.1"/>
</dbReference>
<dbReference type="RefSeq" id="XP_047278959.1">
    <molecule id="Q5SYB0-1"/>
    <property type="nucleotide sequence ID" value="XM_047423003.1"/>
</dbReference>
<dbReference type="RefSeq" id="XP_054218352.1">
    <molecule id="Q5SYB0-1"/>
    <property type="nucleotide sequence ID" value="XM_054362377.1"/>
</dbReference>
<dbReference type="PDB" id="2EDV">
    <property type="method" value="NMR"/>
    <property type="chains" value="A=54-136"/>
</dbReference>
<dbReference type="PDB" id="4G2V">
    <property type="method" value="X-ray"/>
    <property type="resolution" value="2.40 A"/>
    <property type="chains" value="B=901-938"/>
</dbReference>
<dbReference type="PDBsum" id="2EDV"/>
<dbReference type="PDBsum" id="4G2V"/>
<dbReference type="SMR" id="Q5SYB0"/>
<dbReference type="BioGRID" id="116516">
    <property type="interactions" value="6"/>
</dbReference>
<dbReference type="ELM" id="Q5SYB0"/>
<dbReference type="FunCoup" id="Q5SYB0">
    <property type="interactions" value="185"/>
</dbReference>
<dbReference type="IntAct" id="Q5SYB0">
    <property type="interactions" value="4"/>
</dbReference>
<dbReference type="MINT" id="Q5SYB0"/>
<dbReference type="STRING" id="9606.ENSP00000444411"/>
<dbReference type="GlyGen" id="Q5SYB0">
    <property type="glycosylation" value="3 sites"/>
</dbReference>
<dbReference type="iPTMnet" id="Q5SYB0"/>
<dbReference type="PhosphoSitePlus" id="Q5SYB0"/>
<dbReference type="BioMuta" id="FRMPD1"/>
<dbReference type="DMDM" id="74754275"/>
<dbReference type="jPOST" id="Q5SYB0"/>
<dbReference type="MassIVE" id="Q5SYB0"/>
<dbReference type="PaxDb" id="9606-ENSP00000444411"/>
<dbReference type="PeptideAtlas" id="Q5SYB0"/>
<dbReference type="ProteomicsDB" id="5590"/>
<dbReference type="ProteomicsDB" id="64023">
    <molecule id="Q5SYB0-1"/>
</dbReference>
<dbReference type="ProteomicsDB" id="6913"/>
<dbReference type="Antibodypedia" id="26299">
    <property type="antibodies" value="105 antibodies from 24 providers"/>
</dbReference>
<dbReference type="DNASU" id="22844"/>
<dbReference type="Ensembl" id="ENST00000377765.8">
    <molecule id="Q5SYB0-1"/>
    <property type="protein sequence ID" value="ENSP00000366995.3"/>
    <property type="gene ID" value="ENSG00000070601.10"/>
</dbReference>
<dbReference type="Ensembl" id="ENST00000539465.5">
    <molecule id="Q5SYB0-1"/>
    <property type="protein sequence ID" value="ENSP00000444411.1"/>
    <property type="gene ID" value="ENSG00000070601.10"/>
</dbReference>
<dbReference type="GeneID" id="22844"/>
<dbReference type="KEGG" id="hsa:22844"/>
<dbReference type="MANE-Select" id="ENST00000377765.8">
    <property type="protein sequence ID" value="ENSP00000366995.3"/>
    <property type="RefSeq nucleotide sequence ID" value="NM_014907.3"/>
    <property type="RefSeq protein sequence ID" value="NP_055722.2"/>
</dbReference>
<dbReference type="UCSC" id="uc004aag.2">
    <molecule id="Q5SYB0-1"/>
    <property type="organism name" value="human"/>
</dbReference>
<dbReference type="AGR" id="HGNC:29159"/>
<dbReference type="CTD" id="22844"/>
<dbReference type="DisGeNET" id="22844"/>
<dbReference type="GeneCards" id="FRMPD1"/>
<dbReference type="HGNC" id="HGNC:29159">
    <property type="gene designation" value="FRMPD1"/>
</dbReference>
<dbReference type="HPA" id="ENSG00000070601">
    <property type="expression patterns" value="Tissue enriched (retina)"/>
</dbReference>
<dbReference type="MIM" id="616919">
    <property type="type" value="gene"/>
</dbReference>
<dbReference type="neXtProt" id="NX_Q5SYB0"/>
<dbReference type="OpenTargets" id="ENSG00000070601"/>
<dbReference type="PharmGKB" id="PA134910182"/>
<dbReference type="VEuPathDB" id="HostDB:ENSG00000070601"/>
<dbReference type="eggNOG" id="KOG3552">
    <property type="taxonomic scope" value="Eukaryota"/>
</dbReference>
<dbReference type="GeneTree" id="ENSGT00950000183035"/>
<dbReference type="HOGENOM" id="CLU_003698_0_0_1"/>
<dbReference type="InParanoid" id="Q5SYB0"/>
<dbReference type="OMA" id="ESMDDVC"/>
<dbReference type="OrthoDB" id="5859304at2759"/>
<dbReference type="PAN-GO" id="Q5SYB0">
    <property type="GO annotations" value="2 GO annotations based on evolutionary models"/>
</dbReference>
<dbReference type="PhylomeDB" id="Q5SYB0"/>
<dbReference type="TreeFam" id="TF316497"/>
<dbReference type="PathwayCommons" id="Q5SYB0"/>
<dbReference type="SignaLink" id="Q5SYB0"/>
<dbReference type="BioGRID-ORCS" id="22844">
    <property type="hits" value="12 hits in 1146 CRISPR screens"/>
</dbReference>
<dbReference type="ChiTaRS" id="FRMPD1">
    <property type="organism name" value="human"/>
</dbReference>
<dbReference type="EvolutionaryTrace" id="Q5SYB0"/>
<dbReference type="GenomeRNAi" id="22844"/>
<dbReference type="Pharos" id="Q5SYB0">
    <property type="development level" value="Tbio"/>
</dbReference>
<dbReference type="PRO" id="PR:Q5SYB0"/>
<dbReference type="Proteomes" id="UP000005640">
    <property type="component" value="Chromosome 9"/>
</dbReference>
<dbReference type="RNAct" id="Q5SYB0">
    <property type="molecule type" value="protein"/>
</dbReference>
<dbReference type="Bgee" id="ENSG00000070601">
    <property type="expression patterns" value="Expressed in dorsal root ganglion and 107 other cell types or tissues"/>
</dbReference>
<dbReference type="ExpressionAtlas" id="Q5SYB0">
    <property type="expression patterns" value="baseline and differential"/>
</dbReference>
<dbReference type="GO" id="GO:0005856">
    <property type="term" value="C:cytoskeleton"/>
    <property type="evidence" value="ECO:0007669"/>
    <property type="project" value="InterPro"/>
</dbReference>
<dbReference type="GO" id="GO:0005829">
    <property type="term" value="C:cytosol"/>
    <property type="evidence" value="ECO:0007669"/>
    <property type="project" value="UniProtKB-SubCell"/>
</dbReference>
<dbReference type="GO" id="GO:0005886">
    <property type="term" value="C:plasma membrane"/>
    <property type="evidence" value="ECO:0000315"/>
    <property type="project" value="UniProtKB"/>
</dbReference>
<dbReference type="GO" id="GO:0032991">
    <property type="term" value="C:protein-containing complex"/>
    <property type="evidence" value="ECO:0000315"/>
    <property type="project" value="UniProtKB"/>
</dbReference>
<dbReference type="GO" id="GO:0090150">
    <property type="term" value="P:establishment of protein localization to membrane"/>
    <property type="evidence" value="ECO:0000315"/>
    <property type="project" value="UniProtKB"/>
</dbReference>
<dbReference type="GO" id="GO:0036367">
    <property type="term" value="P:light adaption"/>
    <property type="evidence" value="ECO:0007669"/>
    <property type="project" value="Ensembl"/>
</dbReference>
<dbReference type="GO" id="GO:0015031">
    <property type="term" value="P:protein transport"/>
    <property type="evidence" value="ECO:0007669"/>
    <property type="project" value="Ensembl"/>
</dbReference>
<dbReference type="GO" id="GO:0008277">
    <property type="term" value="P:regulation of G protein-coupled receptor signaling pathway"/>
    <property type="evidence" value="ECO:0000315"/>
    <property type="project" value="UniProtKB"/>
</dbReference>
<dbReference type="CDD" id="cd14473">
    <property type="entry name" value="FERM_B-lobe"/>
    <property type="match status" value="1"/>
</dbReference>
<dbReference type="CDD" id="cd13183">
    <property type="entry name" value="FERM_C_FRMPD1_FRMPD3_FRMPD4"/>
    <property type="match status" value="1"/>
</dbReference>
<dbReference type="CDD" id="cd17168">
    <property type="entry name" value="FERM_F1_FRMPD1"/>
    <property type="match status" value="1"/>
</dbReference>
<dbReference type="CDD" id="cd21942">
    <property type="entry name" value="LGNbd_FRMPD1"/>
    <property type="match status" value="1"/>
</dbReference>
<dbReference type="CDD" id="cd06769">
    <property type="entry name" value="PDZ_FRMPD1_3_4-like"/>
    <property type="match status" value="1"/>
</dbReference>
<dbReference type="FunFam" id="3.10.20.90:FF:000203">
    <property type="entry name" value="FERM and PDZ domain containing 1"/>
    <property type="match status" value="1"/>
</dbReference>
<dbReference type="FunFam" id="1.20.80.10:FF:000009">
    <property type="entry name" value="FERM and PDZ domain containing 4"/>
    <property type="match status" value="1"/>
</dbReference>
<dbReference type="FunFam" id="2.30.42.10:FF:000168">
    <property type="entry name" value="FERM and PDZ domain-containing protein 1"/>
    <property type="match status" value="1"/>
</dbReference>
<dbReference type="FunFam" id="2.30.29.30:FF:000066">
    <property type="entry name" value="FERM and PDZ domain-containing protein 4"/>
    <property type="match status" value="1"/>
</dbReference>
<dbReference type="Gene3D" id="1.20.80.10">
    <property type="match status" value="1"/>
</dbReference>
<dbReference type="Gene3D" id="2.30.42.10">
    <property type="match status" value="1"/>
</dbReference>
<dbReference type="Gene3D" id="3.10.20.90">
    <property type="entry name" value="Phosphatidylinositol 3-kinase Catalytic Subunit, Chain A, domain 1"/>
    <property type="match status" value="1"/>
</dbReference>
<dbReference type="Gene3D" id="2.30.29.30">
    <property type="entry name" value="Pleckstrin-homology domain (PH domain)/Phosphotyrosine-binding domain (PTB)"/>
    <property type="match status" value="1"/>
</dbReference>
<dbReference type="InterPro" id="IPR019749">
    <property type="entry name" value="Band_41_domain"/>
</dbReference>
<dbReference type="InterPro" id="IPR049385">
    <property type="entry name" value="FAK1-like_FERM_C"/>
</dbReference>
<dbReference type="InterPro" id="IPR014352">
    <property type="entry name" value="FERM/acyl-CoA-bd_prot_sf"/>
</dbReference>
<dbReference type="InterPro" id="IPR035963">
    <property type="entry name" value="FERM_2"/>
</dbReference>
<dbReference type="InterPro" id="IPR019748">
    <property type="entry name" value="FERM_central"/>
</dbReference>
<dbReference type="InterPro" id="IPR000299">
    <property type="entry name" value="FERM_domain"/>
</dbReference>
<dbReference type="InterPro" id="IPR041779">
    <property type="entry name" value="FRMPD1/3/4_FERM_C"/>
</dbReference>
<dbReference type="InterPro" id="IPR001478">
    <property type="entry name" value="PDZ"/>
</dbReference>
<dbReference type="InterPro" id="IPR036034">
    <property type="entry name" value="PDZ_sf"/>
</dbReference>
<dbReference type="InterPro" id="IPR011993">
    <property type="entry name" value="PH-like_dom_sf"/>
</dbReference>
<dbReference type="InterPro" id="IPR029071">
    <property type="entry name" value="Ubiquitin-like_domsf"/>
</dbReference>
<dbReference type="PANTHER" id="PTHR46221:SF2">
    <property type="entry name" value="FERM AND PDZ DOMAIN-CONTAINING PROTEIN 1"/>
    <property type="match status" value="1"/>
</dbReference>
<dbReference type="PANTHER" id="PTHR46221">
    <property type="entry name" value="FERM AND PDZ DOMAIN-CONTAINING PROTEIN FAMILY MEMBER"/>
    <property type="match status" value="1"/>
</dbReference>
<dbReference type="Pfam" id="PF21477">
    <property type="entry name" value="FERM_C_FAK1"/>
    <property type="match status" value="1"/>
</dbReference>
<dbReference type="Pfam" id="PF00373">
    <property type="entry name" value="FERM_M"/>
    <property type="match status" value="1"/>
</dbReference>
<dbReference type="Pfam" id="PF00595">
    <property type="entry name" value="PDZ"/>
    <property type="match status" value="1"/>
</dbReference>
<dbReference type="SMART" id="SM00295">
    <property type="entry name" value="B41"/>
    <property type="match status" value="1"/>
</dbReference>
<dbReference type="SMART" id="SM00228">
    <property type="entry name" value="PDZ"/>
    <property type="match status" value="1"/>
</dbReference>
<dbReference type="SUPFAM" id="SSF50156">
    <property type="entry name" value="PDZ domain-like"/>
    <property type="match status" value="1"/>
</dbReference>
<dbReference type="SUPFAM" id="SSF50729">
    <property type="entry name" value="PH domain-like"/>
    <property type="match status" value="1"/>
</dbReference>
<dbReference type="SUPFAM" id="SSF47031">
    <property type="entry name" value="Second domain of FERM"/>
    <property type="match status" value="1"/>
</dbReference>
<dbReference type="SUPFAM" id="SSF54236">
    <property type="entry name" value="Ubiquitin-like"/>
    <property type="match status" value="1"/>
</dbReference>
<dbReference type="PROSITE" id="PS50057">
    <property type="entry name" value="FERM_3"/>
    <property type="match status" value="1"/>
</dbReference>
<dbReference type="PROSITE" id="PS50106">
    <property type="entry name" value="PDZ"/>
    <property type="match status" value="1"/>
</dbReference>
<evidence type="ECO:0000255" key="1">
    <source>
        <dbReference type="PROSITE-ProRule" id="PRU00084"/>
    </source>
</evidence>
<evidence type="ECO:0000255" key="2">
    <source>
        <dbReference type="PROSITE-ProRule" id="PRU00143"/>
    </source>
</evidence>
<evidence type="ECO:0000256" key="3">
    <source>
        <dbReference type="SAM" id="MobiDB-lite"/>
    </source>
</evidence>
<evidence type="ECO:0000269" key="4">
    <source>
    </source>
</evidence>
<evidence type="ECO:0000269" key="5">
    <source>
    </source>
</evidence>
<evidence type="ECO:0000269" key="6">
    <source>
    </source>
</evidence>
<evidence type="ECO:0000269" key="7">
    <source>
    </source>
</evidence>
<evidence type="ECO:0000303" key="8">
    <source>
    </source>
</evidence>
<evidence type="ECO:0000305" key="9"/>
<evidence type="ECO:0007829" key="10">
    <source>
        <dbReference type="PDB" id="2EDV"/>
    </source>
</evidence>
<accession>Q5SYB0</accession>
<accession>B4DZC8</accession>
<accession>B7Z807</accession>
<accession>D3DRQ3</accession>
<accession>Q14C73</accession>
<accession>Q5HY96</accession>
<accession>Q9Y2H3</accession>
<comment type="function">
    <text evidence="6">Stabilizes membrane-bound GPSM1, and thereby promotes its interaction with GNAI1.</text>
</comment>
<comment type="subunit">
    <text evidence="6 7">Interacts with GPSM1 (PubMed:18566450). Interacts with GPSM2 (via TPR repeat region) (PubMed:23318951).</text>
</comment>
<comment type="interaction">
    <interactant intactId="EBI-10245120">
        <id>Q5SYB0</id>
    </interactant>
    <interactant intactId="EBI-1045155">
        <id>P43360</id>
        <label>MAGEA6</label>
    </interactant>
    <organismsDiffer>false</organismsDiffer>
    <experiments>3</experiments>
</comment>
<comment type="subcellular location">
    <subcellularLocation>
        <location evidence="6">Cytoplasm</location>
        <location evidence="6">Cytosol</location>
    </subcellularLocation>
    <subcellularLocation>
        <location evidence="6">Cell membrane</location>
        <topology evidence="6">Peripheral membrane protein</topology>
        <orientation evidence="6">Cytoplasmic side</orientation>
    </subcellularLocation>
    <text evidence="6">Found both in the cytoplasm and associated with the cell membrane.</text>
</comment>
<comment type="alternative products">
    <event type="alternative splicing"/>
    <isoform>
        <id>Q5SYB0-1</id>
        <name>1</name>
        <sequence type="displayed"/>
    </isoform>
    <isoform>
        <id>Q5SYB0-2</id>
        <name>2</name>
        <sequence type="described" ref="VSP_056060 VSP_056063 VSP_056064"/>
    </isoform>
    <isoform>
        <id>Q5SYB0-3</id>
        <name>3</name>
        <sequence type="described" ref="VSP_056061 VSP_056062 VSP_056063 VSP_056064"/>
    </isoform>
</comment>
<proteinExistence type="evidence at protein level"/>
<keyword id="KW-0002">3D-structure</keyword>
<keyword id="KW-0025">Alternative splicing</keyword>
<keyword id="KW-1003">Cell membrane</keyword>
<keyword id="KW-0963">Cytoplasm</keyword>
<keyword id="KW-0472">Membrane</keyword>
<keyword id="KW-1267">Proteomics identification</keyword>
<keyword id="KW-1185">Reference proteome</keyword>
<protein>
    <recommendedName>
        <fullName>FERM and PDZ domain-containing protein 1</fullName>
    </recommendedName>
    <alternativeName>
        <fullName>FERM domain-containing protein 2</fullName>
    </alternativeName>
</protein>
<organism>
    <name type="scientific">Homo sapiens</name>
    <name type="common">Human</name>
    <dbReference type="NCBI Taxonomy" id="9606"/>
    <lineage>
        <taxon>Eukaryota</taxon>
        <taxon>Metazoa</taxon>
        <taxon>Chordata</taxon>
        <taxon>Craniata</taxon>
        <taxon>Vertebrata</taxon>
        <taxon>Euteleostomi</taxon>
        <taxon>Mammalia</taxon>
        <taxon>Eutheria</taxon>
        <taxon>Euarchontoglires</taxon>
        <taxon>Primates</taxon>
        <taxon>Haplorrhini</taxon>
        <taxon>Catarrhini</taxon>
        <taxon>Hominidae</taxon>
        <taxon>Homo</taxon>
    </lineage>
</organism>
<name>FRPD1_HUMAN</name>
<sequence>MEELETSLFQTRKAHRIEQMVARWLRRSRDSSARAKVAAADGPARNPTQTLIPVRHTVKIDKDTLLQDYGFHISESLPLTVVAVTAGGSAHGKLFPGDQILQMNNEPAEDLSWERAVDILREAEDSLSITVVRCTSGVPKSSFLTEEKRARLKTNPVKVHFAEEVLISGHSQGNSLLCMPNVLKLYLENGQTKAFKFEANTTVKDIILTVKEKLSIRSIEYFALALEEQYSISRLHLLHEEELIQQVVEREESHDYRCLFRVCFVPKDPLDLLKEDPVAFEYLYLQSCSDVLQERFAVEMKCSSALRLAALHIQERIYACAQPQKISLKYIEKDWGIENFISPTLLRNMKGKDIKKAISFHMKRNQNLLEPRQKQLISAAQLRLNYLQILGELKTYGGRIFNATLMLQDRESYIALLVGAKYGISQVINSKLNIMSTLAEFANISRVELTEESEKVSVVKVYLQDVKVLTLLLESNSAKDLACLIAGYYRLLVDPVTSIFLWPGNKQQAHRVSAEEGYESRACSDSEESSEVDCVLEPLSDRRLVKLAPCRSLIKEEQPPGNSPTPEVARRGPSTCGASSTTDSAESEASDSANTESRGYRTSGSSESMDALEEDDLDTCSSSRSTFFHFGSPGLAESIDSDSQEERSGIETSGFLCLLDLAQRANPQCQKTEFSESAALETFGWAPELSTVRLDPRLYEGSHADYYSLCSSVSPASYLSDSSESTASRQGGAPPAWGQQGWTEAQPSSMLEPLALHPPLAFEDGSSDEEYYDAADKLTPPGPPSGPRDVSTAEPSATSLQNKASTSSPENSLPCGPDGRQPSRRGGVKKYAKTLRKRRSFLQTDYTSQVSFPLVPSASLESVDDVCYYDREPYLALGAPSPTVSSLQDMQGEPGLLETKALGLLAPLRETKSTNPASRVMEMEPETMETKSVIDSRVSSISAIRFRIDPNNKENSGVVPAASSSASTPHCSNPGSSGPDTAQARPSQILPLSQDLDGIAPKEPTIEHGDSSFSLSSGDPNPDRACLASNPGLNNVSQGDTLELQLEPHVQLEMGLESFCTNHIQETAPKYTEPLLSPRDEPRSDECGINPGEKIASIPTKEEPQGQLSLERDREVTNKNGTNVFQEESRKDSGDSPGDVSNNVSQTLDISSPAGKIVTSLSLDAPVTGTEQIPPHPPRDPQGQSREPPGQGCQAQEQKLFVELDLDPDFFLGKQTVSPAVPPEGIKAEAPNHVTGQDIAPRDSPEWVCFNPEPSLPEPLPCPQEDPHLETSNHCLLSEGKSDSSSICLSAEKSFLCFAPESHPEVSASLRVATSLGFAGMNEMVAPRIGMDQCSCQFSYATCFRGPQPETEEEDRDLEAHPMAPLTSPPSAGSPVVLPWRPARAHSCTTAPLSRKSHIWPEYCSRALRQLKATPASTPEGFIQLMESLLELQDILETSWGVGNKHPPEKCTWHFTESRSRLCMGSQKLLSSCRHVIRMDQSPEEMQGAVRDTFQHLVQLAGLCFQFTDCSRCSARHREAAGNLRDVVYTYHQFIEAAKSTCERGYHDLSVKLLARQCTALTAAVFCLTQKFRASTAL</sequence>